<comment type="function">
    <text evidence="2 4 5 6 7 9 11 12">NAD-dependent lysine demalonylase, desuccinylase and deglutarylase that specifically removes malonyl, succinyl and glutaryl groups on target proteins (PubMed:21908771, PubMed:22076378, PubMed:23806337, PubMed:24315375, PubMed:24703693). Activates CPS1 and contributes to the regulation of blood ammonia levels during prolonged fasting: acts by mediating desuccinylation and deglutarylation of CPS1, thereby increasing CPS1 activity in response to elevated NAD levels during fasting (PubMed:19410549, PubMed:24703693). Activates SOD1 by mediating its desuccinylation, leading to reduced reactive oxygen species (By similarity). Activates SHMT2 by mediating its desuccinylation (By similarity). Modulates ketogenesis through the desuccinylation and activation of HMGCS2 (PubMed:24315375). Has weak NAD-dependent protein deacetylase activity; however this activity may not be physiologically relevant in vivo. Can deacetylate cytochrome c (CYCS) and a number of other proteins in vitro such as Uox (PubMed:23085393).</text>
</comment>
<comment type="catalytic activity">
    <reaction evidence="2">
        <text>N(6)-malonyl-L-lysyl-[protein] + NAD(+) + H2O = 2''-O-malonyl-ADP-D-ribose + nicotinamide + L-lysyl-[protein]</text>
        <dbReference type="Rhea" id="RHEA:47672"/>
        <dbReference type="Rhea" id="RHEA-COMP:9752"/>
        <dbReference type="Rhea" id="RHEA-COMP:11878"/>
        <dbReference type="ChEBI" id="CHEBI:15377"/>
        <dbReference type="ChEBI" id="CHEBI:17154"/>
        <dbReference type="ChEBI" id="CHEBI:29969"/>
        <dbReference type="ChEBI" id="CHEBI:57540"/>
        <dbReference type="ChEBI" id="CHEBI:87831"/>
        <dbReference type="ChEBI" id="CHEBI:87833"/>
    </reaction>
</comment>
<comment type="catalytic activity">
    <reaction evidence="2">
        <text>N(6)-succinyl-L-lysyl-[protein] + NAD(+) + H2O = 2''-O-succinyl-ADP-D-ribose + nicotinamide + L-lysyl-[protein]</text>
        <dbReference type="Rhea" id="RHEA:47668"/>
        <dbReference type="Rhea" id="RHEA-COMP:9752"/>
        <dbReference type="Rhea" id="RHEA-COMP:11877"/>
        <dbReference type="ChEBI" id="CHEBI:15377"/>
        <dbReference type="ChEBI" id="CHEBI:17154"/>
        <dbReference type="ChEBI" id="CHEBI:29969"/>
        <dbReference type="ChEBI" id="CHEBI:57540"/>
        <dbReference type="ChEBI" id="CHEBI:87830"/>
        <dbReference type="ChEBI" id="CHEBI:87832"/>
    </reaction>
</comment>
<comment type="catalytic activity">
    <reaction evidence="2 12">
        <text>N(6)-glutaryl-L-lysyl-[protein] + NAD(+) + H2O = 2''-O-glutaryl-ADP-D-ribose + nicotinamide + L-lysyl-[protein]</text>
        <dbReference type="Rhea" id="RHEA:47664"/>
        <dbReference type="Rhea" id="RHEA-COMP:9752"/>
        <dbReference type="Rhea" id="RHEA-COMP:11875"/>
        <dbReference type="ChEBI" id="CHEBI:15377"/>
        <dbReference type="ChEBI" id="CHEBI:17154"/>
        <dbReference type="ChEBI" id="CHEBI:29969"/>
        <dbReference type="ChEBI" id="CHEBI:57540"/>
        <dbReference type="ChEBI" id="CHEBI:87828"/>
        <dbReference type="ChEBI" id="CHEBI:87829"/>
    </reaction>
</comment>
<comment type="cofactor">
    <cofactor evidence="2">
        <name>Zn(2+)</name>
        <dbReference type="ChEBI" id="CHEBI:29105"/>
    </cofactor>
    <text evidence="2">Binds 1 zinc ion per subunit.</text>
</comment>
<comment type="subunit">
    <text evidence="1 2 4 8">Monomer. Homodimer (By similarity). Interacts with CPS1 (PubMed:19410549). Interacts with PCCA (PubMed:23438705).</text>
</comment>
<comment type="interaction">
    <interactant intactId="EBI-2348809">
        <id>Q8K2C6</id>
    </interactant>
    <interactant intactId="EBI-2348828">
        <id>Q8C196</id>
        <label>Cps1</label>
    </interactant>
    <organismsDiffer>false</organismsDiffer>
    <experiments>2</experiments>
</comment>
<comment type="subcellular location">
    <subcellularLocation>
        <location>Mitochondrion</location>
    </subcellularLocation>
    <subcellularLocation>
        <location>Cytoplasm</location>
        <location>Cytosol</location>
    </subcellularLocation>
    <subcellularLocation>
        <location>Nucleus</location>
    </subcellularLocation>
    <text>Mainly mitochondrial. Also present extramitochondrially, with a fraction present in the cytosol and very small amounts also detected in the nucleus.</text>
</comment>
<comment type="tissue specificity">
    <text evidence="4">Detected in brain, liver, heart, kidney, lung, thymus, spleen, skeletal muscle, intestine, pancreas and testis (at protein level).</text>
</comment>
<comment type="domain">
    <text evidence="2">In contrast to class I sirtuins, class III sirtuins have only weak deacetylase activity. Difference in substrate specificity is probably due to a larger hydrophobic pocket with 2 residues (Tyr-102 and Arg-105) that bind to malonylated and succinylated substrates and define the specificity.</text>
</comment>
<comment type="disruption phenotype">
    <text evidence="4 5 6 9 10 11 12">Mice are born at an abnormal Mendelian ratio with the number of live-born pups reduced by 40% (PubMed:24076663). Surviving mice display a global protein hypersuccinylation and hyperglutarylation in both liver and skeletal muscle, while global lysine acetylation is not significantly impacted (PubMed:22076378, PubMed:23806337, PubMed:24315375, PubMed:24703693). Mice display elevated levels of blood ammonia during fasting, but otherwise are metabolically similar to wild-type (PubMed:24076663). No overt phenotype observed in mice on chow or high fat diet, suggesting that Sirt5 may be dispensable for basal homeostasis under these conditions (PubMed:24076663). After 48 hours of fasting, the absence of Cps1 activation leads to elevated blood ammonia levels, possibly due to the presence of succinylation at 'Lys-1291' in Cps1 (PubMed:22076378). Animals show a decrease of fatty acid oxidation and increase of acylcarnitines accumulation (PubMed:24315375).</text>
</comment>
<comment type="similarity">
    <text evidence="2">Belongs to the sirtuin family. Class III subfamily.</text>
</comment>
<comment type="caution">
    <text evidence="13">The ability to deacetylate Uox in vivo is unclear. The anti-acetylated lysine antibody used in the assay is not fully specific and cross-reacts with some acylated lysines. It is therefore possible that it also recognizes N6-malonyllysine and N6-succinyllysine residues (PubMed:23085393).</text>
</comment>
<proteinExistence type="evidence at protein level"/>
<accession>Q8K2C6</accession>
<keyword id="KW-0963">Cytoplasm</keyword>
<keyword id="KW-0903">Direct protein sequencing</keyword>
<keyword id="KW-0479">Metal-binding</keyword>
<keyword id="KW-0496">Mitochondrion</keyword>
<keyword id="KW-0520">NAD</keyword>
<keyword id="KW-0539">Nucleus</keyword>
<keyword id="KW-1185">Reference proteome</keyword>
<keyword id="KW-0808">Transferase</keyword>
<keyword id="KW-0809">Transit peptide</keyword>
<keyword id="KW-0862">Zinc</keyword>
<reference key="1">
    <citation type="journal article" date="2004" name="Genome Res.">
        <title>The status, quality, and expansion of the NIH full-length cDNA project: the Mammalian Gene Collection (MGC).</title>
        <authorList>
            <consortium name="The MGC Project Team"/>
        </authorList>
    </citation>
    <scope>NUCLEOTIDE SEQUENCE [LARGE SCALE MRNA]</scope>
    <source>
        <tissue>Mammary tumor</tissue>
    </source>
</reference>
<reference key="2">
    <citation type="journal article" date="2009" name="Cell">
        <title>SIRT5 Deacetylates carbamoyl phosphate synthetase 1 and regulates the urea cycle.</title>
        <authorList>
            <person name="Nakagawa T."/>
            <person name="Lomb D.J."/>
            <person name="Haigis M.C."/>
            <person name="Guarente L."/>
        </authorList>
    </citation>
    <scope>PROTEIN SEQUENCE OF N-TERMINUS</scope>
    <scope>FUNCTION</scope>
    <scope>MUTAGENESIS OF HIS-158</scope>
    <scope>SUBCELLULAR LOCATION</scope>
    <scope>INTERACTION WITH CPS1</scope>
    <scope>DISRUPTION PHENOTYPE</scope>
    <scope>TISSUE SPECIFICITY</scope>
</reference>
<reference key="3">
    <citation type="journal article" date="2010" name="Cell">
        <title>A tissue-specific atlas of mouse protein phosphorylation and expression.</title>
        <authorList>
            <person name="Huttlin E.L."/>
            <person name="Jedrychowski M.P."/>
            <person name="Elias J.E."/>
            <person name="Goswami T."/>
            <person name="Rad R."/>
            <person name="Beausoleil S.A."/>
            <person name="Villen J."/>
            <person name="Haas W."/>
            <person name="Sowa M.E."/>
            <person name="Gygi S.P."/>
        </authorList>
    </citation>
    <scope>IDENTIFICATION BY MASS SPECTROMETRY [LARGE SCALE ANALYSIS]</scope>
    <source>
        <tissue>Brain</tissue>
        <tissue>Brown adipose tissue</tissue>
        <tissue>Heart</tissue>
        <tissue>Kidney</tissue>
        <tissue>Liver</tissue>
        <tissue>Pancreas</tissue>
    </source>
</reference>
<reference key="4">
    <citation type="journal article" date="2011" name="Mol. Cell. Proteomics">
        <title>The first identification of lysine malonylation substrates and its regulatory enzyme.</title>
        <authorList>
            <person name="Peng C."/>
            <person name="Lu Z."/>
            <person name="Xie Z."/>
            <person name="Cheng Z."/>
            <person name="Chen Y."/>
            <person name="Tan M."/>
            <person name="Luo H."/>
            <person name="Zhang Y."/>
            <person name="He W."/>
            <person name="Yang K."/>
            <person name="Zwaans B.M."/>
            <person name="Tishkoff D."/>
            <person name="Ho L."/>
            <person name="Lombard D."/>
            <person name="He T.C."/>
            <person name="Dai J."/>
            <person name="Verdin E."/>
            <person name="Ye Y."/>
            <person name="Zhao Y."/>
        </authorList>
    </citation>
    <scope>FUNCTION</scope>
    <scope>DISRUPTION PHENOTYPE</scope>
</reference>
<reference key="5">
    <citation type="journal article" date="2011" name="Science">
        <title>Sirt5 is a NAD-dependent protein lysine demalonylase and desuccinylase.</title>
        <authorList>
            <person name="Du J."/>
            <person name="Zhou Y."/>
            <person name="Su X."/>
            <person name="Yu J.J."/>
            <person name="Khan S."/>
            <person name="Jiang H."/>
            <person name="Kim J."/>
            <person name="Woo J."/>
            <person name="Kim J.H."/>
            <person name="Choi B.H."/>
            <person name="He B."/>
            <person name="Chen W."/>
            <person name="Zhang S."/>
            <person name="Cerione R.A."/>
            <person name="Auwerx J."/>
            <person name="Hao Q."/>
            <person name="Lin H."/>
        </authorList>
    </citation>
    <scope>FUNCTION</scope>
    <scope>DISRUPTION PHENOTYPE</scope>
</reference>
<reference key="6">
    <citation type="journal article" date="2012" name="FEBS Lett.">
        <title>SIRT5 deacetylates and activates urate oxidase in liver mitochondria of mice.</title>
        <authorList>
            <person name="Nakamura Y."/>
            <person name="Ogura M."/>
            <person name="Ogura K."/>
            <person name="Tanaka D."/>
            <person name="Inagaki N."/>
        </authorList>
    </citation>
    <scope>FUNCTION</scope>
</reference>
<reference key="7">
    <citation type="journal article" date="2013" name="Cell Metab.">
        <title>SIRT5 regulates the mitochondrial lysine succinylome and metabolic networks.</title>
        <authorList>
            <person name="Rardin M.J."/>
            <person name="He W."/>
            <person name="Nishida Y."/>
            <person name="Newman J.C."/>
            <person name="Carrico C."/>
            <person name="Danielson S.R."/>
            <person name="Guo A."/>
            <person name="Gut P."/>
            <person name="Sahu A.K."/>
            <person name="Li B."/>
            <person name="Uppala R."/>
            <person name="Fitch M."/>
            <person name="Riiff T."/>
            <person name="Zhu L."/>
            <person name="Zhou J."/>
            <person name="Mulhern D."/>
            <person name="Stevens R.D."/>
            <person name="Ilkayeva O.R."/>
            <person name="Newgard C.B."/>
            <person name="Jacobson M.P."/>
            <person name="Hellerstein M."/>
            <person name="Goetzman E.S."/>
            <person name="Gibson B.W."/>
            <person name="Verdin E."/>
        </authorList>
    </citation>
    <scope>FUNCTION</scope>
    <scope>DISRUPTION PHENOTYPE</scope>
</reference>
<reference key="8">
    <citation type="journal article" date="2013" name="Mitochondrion">
        <title>Mitochondrial SIRT4-type proteins in Caenorhabditis elegans and mammals interact with pyruvate carboxylase and other acetylated biotin-dependent carboxylases.</title>
        <authorList>
            <person name="Wirth M."/>
            <person name="Karaca S."/>
            <person name="Wenzel D."/>
            <person name="Ho L."/>
            <person name="Tishkoff D."/>
            <person name="Lombard D.B."/>
            <person name="Verdin E."/>
            <person name="Urlaub H."/>
            <person name="Jedrusik-Bode M."/>
            <person name="Fischle W."/>
        </authorList>
    </citation>
    <scope>INTERACTION WITH PCCA</scope>
</reference>
<reference key="9">
    <citation type="journal article" date="2013" name="Mol. Cell">
        <title>SIRT5-mediated lysine desuccinylation impacts diverse metabolic pathways.</title>
        <authorList>
            <person name="Park J."/>
            <person name="Chen Y."/>
            <person name="Tishkoff D.X."/>
            <person name="Peng C."/>
            <person name="Tan M."/>
            <person name="Dai L."/>
            <person name="Xie Z."/>
            <person name="Zhang Y."/>
            <person name="Zwaans B.M."/>
            <person name="Skinner M.E."/>
            <person name="Lombard D.B."/>
            <person name="Zhao Y."/>
        </authorList>
    </citation>
    <scope>FUNCTION</scope>
    <scope>SUBCELLULAR LOCATION</scope>
    <scope>DISRUPTION PHENOTYPE</scope>
</reference>
<reference key="10">
    <citation type="journal article" date="2013" name="Sci. Rep.">
        <title>Metabolic characterization of a Sirt5 deficient mouse model.</title>
        <authorList>
            <person name="Yu J."/>
            <person name="Sadhukhan S."/>
            <person name="Noriega L.G."/>
            <person name="Moullan N."/>
            <person name="He B."/>
            <person name="Weiss R.S."/>
            <person name="Lin H."/>
            <person name="Schoonjans K."/>
            <person name="Auwerx J."/>
        </authorList>
    </citation>
    <scope>DISRUPTION PHENOTYPE</scope>
</reference>
<reference key="11">
    <citation type="journal article" date="2014" name="Cell Metab.">
        <title>Lysine glutarylation is a protein posttranslational modification regulated by SIRT5.</title>
        <authorList>
            <person name="Tan M."/>
            <person name="Peng C."/>
            <person name="Anderson K.A."/>
            <person name="Chhoy P."/>
            <person name="Xie Z."/>
            <person name="Dai L."/>
            <person name="Park J."/>
            <person name="Chen Y."/>
            <person name="Huang H."/>
            <person name="Zhang Y."/>
            <person name="Ro J."/>
            <person name="Wagner G.R."/>
            <person name="Green M.F."/>
            <person name="Madsen A.S."/>
            <person name="Schmiesing J."/>
            <person name="Peterson B.S."/>
            <person name="Xu G."/>
            <person name="Ilkayeva O.R."/>
            <person name="Muehlbauer M.J."/>
            <person name="Braulke T."/>
            <person name="Muehlhausen C."/>
            <person name="Backos D.S."/>
            <person name="Olsen C.A."/>
            <person name="McGuire P.J."/>
            <person name="Pletcher S.D."/>
            <person name="Lombard D.B."/>
            <person name="Hirschey M.D."/>
            <person name="Zhao Y."/>
        </authorList>
    </citation>
    <scope>FUNCTION</scope>
    <scope>DISRUPTION PHENOTYPE</scope>
    <scope>CATALYTIC ACTIVITY</scope>
</reference>
<dbReference type="EC" id="2.3.1.-" evidence="2 12"/>
<dbReference type="EMBL" id="BC031770">
    <property type="protein sequence ID" value="AAH31770.1"/>
    <property type="molecule type" value="mRNA"/>
</dbReference>
<dbReference type="CCDS" id="CCDS26478.1"/>
<dbReference type="RefSeq" id="NP_849179.1">
    <property type="nucleotide sequence ID" value="NM_178848.3"/>
</dbReference>
<dbReference type="RefSeq" id="XP_030103247.1">
    <property type="nucleotide sequence ID" value="XM_030247387.2"/>
</dbReference>
<dbReference type="RefSeq" id="XP_030103248.1">
    <property type="nucleotide sequence ID" value="XM_030247388.2"/>
</dbReference>
<dbReference type="RefSeq" id="XP_030103249.1">
    <property type="nucleotide sequence ID" value="XM_030247389.2"/>
</dbReference>
<dbReference type="SMR" id="Q8K2C6"/>
<dbReference type="BioGRID" id="212813">
    <property type="interactions" value="4"/>
</dbReference>
<dbReference type="FunCoup" id="Q8K2C6">
    <property type="interactions" value="763"/>
</dbReference>
<dbReference type="IntAct" id="Q8K2C6">
    <property type="interactions" value="4"/>
</dbReference>
<dbReference type="MINT" id="Q8K2C6"/>
<dbReference type="STRING" id="10090.ENSMUSP00000152796"/>
<dbReference type="GlyGen" id="Q8K2C6">
    <property type="glycosylation" value="1 site, 1 O-linked glycan (1 site)"/>
</dbReference>
<dbReference type="iPTMnet" id="Q8K2C6"/>
<dbReference type="PhosphoSitePlus" id="Q8K2C6"/>
<dbReference type="jPOST" id="Q8K2C6"/>
<dbReference type="PaxDb" id="10090-ENSMUSP00000071048"/>
<dbReference type="PeptideAtlas" id="Q8K2C6"/>
<dbReference type="ProteomicsDB" id="261238"/>
<dbReference type="Pumba" id="Q8K2C6"/>
<dbReference type="Antibodypedia" id="10177">
    <property type="antibodies" value="675 antibodies from 44 providers"/>
</dbReference>
<dbReference type="DNASU" id="68346"/>
<dbReference type="Ensembl" id="ENSMUST00000066804.5">
    <property type="protein sequence ID" value="ENSMUSP00000071048.5"/>
    <property type="gene ID" value="ENSMUSG00000054021.7"/>
</dbReference>
<dbReference type="Ensembl" id="ENSMUST00000223194.2">
    <property type="protein sequence ID" value="ENSMUSP00000152796.2"/>
    <property type="gene ID" value="ENSMUSG00000054021.7"/>
</dbReference>
<dbReference type="GeneID" id="68346"/>
<dbReference type="KEGG" id="mmu:68346"/>
<dbReference type="UCSC" id="uc007qfz.1">
    <property type="organism name" value="mouse"/>
</dbReference>
<dbReference type="AGR" id="MGI:1915596"/>
<dbReference type="CTD" id="23408"/>
<dbReference type="MGI" id="MGI:1915596">
    <property type="gene designation" value="Sirt5"/>
</dbReference>
<dbReference type="VEuPathDB" id="HostDB:ENSMUSG00000054021"/>
<dbReference type="eggNOG" id="KOG2684">
    <property type="taxonomic scope" value="Eukaryota"/>
</dbReference>
<dbReference type="GeneTree" id="ENSGT00940000156080"/>
<dbReference type="HOGENOM" id="CLU_023643_3_1_1"/>
<dbReference type="InParanoid" id="Q8K2C6"/>
<dbReference type="OMA" id="LIHMHGE"/>
<dbReference type="OrthoDB" id="424302at2759"/>
<dbReference type="PhylomeDB" id="Q8K2C6"/>
<dbReference type="TreeFam" id="TF106183"/>
<dbReference type="BRENDA" id="2.3.1.B43">
    <property type="organism ID" value="3474"/>
</dbReference>
<dbReference type="Reactome" id="R-MMU-2151201">
    <property type="pathway name" value="Transcriptional activation of mitochondrial biogenesis"/>
</dbReference>
<dbReference type="BioGRID-ORCS" id="68346">
    <property type="hits" value="5 hits in 82 CRISPR screens"/>
</dbReference>
<dbReference type="ChiTaRS" id="Sirt5">
    <property type="organism name" value="mouse"/>
</dbReference>
<dbReference type="PRO" id="PR:Q8K2C6"/>
<dbReference type="Proteomes" id="UP000000589">
    <property type="component" value="Chromosome 13"/>
</dbReference>
<dbReference type="RNAct" id="Q8K2C6">
    <property type="molecule type" value="protein"/>
</dbReference>
<dbReference type="Bgee" id="ENSMUSG00000054021">
    <property type="expression patterns" value="Expressed in interventricular septum and 232 other cell types or tissues"/>
</dbReference>
<dbReference type="ExpressionAtlas" id="Q8K2C6">
    <property type="expression patterns" value="baseline and differential"/>
</dbReference>
<dbReference type="GO" id="GO:0005829">
    <property type="term" value="C:cytosol"/>
    <property type="evidence" value="ECO:0000314"/>
    <property type="project" value="UniProtKB"/>
</dbReference>
<dbReference type="GO" id="GO:0005743">
    <property type="term" value="C:mitochondrial inner membrane"/>
    <property type="evidence" value="ECO:0000314"/>
    <property type="project" value="CACAO"/>
</dbReference>
<dbReference type="GO" id="GO:0005758">
    <property type="term" value="C:mitochondrial intermembrane space"/>
    <property type="evidence" value="ECO:0000250"/>
    <property type="project" value="UniProtKB"/>
</dbReference>
<dbReference type="GO" id="GO:0005759">
    <property type="term" value="C:mitochondrial matrix"/>
    <property type="evidence" value="ECO:0000250"/>
    <property type="project" value="UniProtKB"/>
</dbReference>
<dbReference type="GO" id="GO:0005739">
    <property type="term" value="C:mitochondrion"/>
    <property type="evidence" value="ECO:0000314"/>
    <property type="project" value="UniProtKB"/>
</dbReference>
<dbReference type="GO" id="GO:0005634">
    <property type="term" value="C:nucleus"/>
    <property type="evidence" value="ECO:0000304"/>
    <property type="project" value="UniProtKB"/>
</dbReference>
<dbReference type="GO" id="GO:0070403">
    <property type="term" value="F:NAD+ binding"/>
    <property type="evidence" value="ECO:0007669"/>
    <property type="project" value="UniProtKB-UniRule"/>
</dbReference>
<dbReference type="GO" id="GO:0034979">
    <property type="term" value="F:NAD-dependent protein lysine deacetylase activity"/>
    <property type="evidence" value="ECO:0007669"/>
    <property type="project" value="UniProtKB-UniRule"/>
</dbReference>
<dbReference type="GO" id="GO:0061697">
    <property type="term" value="F:protein-glutaryllysine deglutarylase activity"/>
    <property type="evidence" value="ECO:0000314"/>
    <property type="project" value="UniProtKB"/>
</dbReference>
<dbReference type="GO" id="GO:0036054">
    <property type="term" value="F:protein-malonyllysine demalonylase activity"/>
    <property type="evidence" value="ECO:0000314"/>
    <property type="project" value="UniProtKB"/>
</dbReference>
<dbReference type="GO" id="GO:0036055">
    <property type="term" value="F:protein-succinyllysine desuccinylase activity"/>
    <property type="evidence" value="ECO:0000314"/>
    <property type="project" value="UniProtKB"/>
</dbReference>
<dbReference type="GO" id="GO:0008270">
    <property type="term" value="F:zinc ion binding"/>
    <property type="evidence" value="ECO:0007669"/>
    <property type="project" value="UniProtKB-UniRule"/>
</dbReference>
<dbReference type="GO" id="GO:0010667">
    <property type="term" value="P:negative regulation of cardiac muscle cell apoptotic process"/>
    <property type="evidence" value="ECO:0007669"/>
    <property type="project" value="Ensembl"/>
</dbReference>
<dbReference type="GO" id="GO:2000378">
    <property type="term" value="P:negative regulation of reactive oxygen species metabolic process"/>
    <property type="evidence" value="ECO:0007669"/>
    <property type="project" value="Ensembl"/>
</dbReference>
<dbReference type="GO" id="GO:0036047">
    <property type="term" value="P:peptidyl-lysine demalonylation"/>
    <property type="evidence" value="ECO:0000315"/>
    <property type="project" value="UniProtKB"/>
</dbReference>
<dbReference type="GO" id="GO:0036049">
    <property type="term" value="P:peptidyl-lysine desuccinylation"/>
    <property type="evidence" value="ECO:0000315"/>
    <property type="project" value="UniProtKB"/>
</dbReference>
<dbReference type="GO" id="GO:0061698">
    <property type="term" value="P:protein deglutarylation"/>
    <property type="evidence" value="ECO:0000314"/>
    <property type="project" value="UniProtKB"/>
</dbReference>
<dbReference type="GO" id="GO:0036046">
    <property type="term" value="P:protein demalonylation"/>
    <property type="evidence" value="ECO:0000314"/>
    <property type="project" value="UniProtKB"/>
</dbReference>
<dbReference type="GO" id="GO:0036048">
    <property type="term" value="P:protein desuccinylation"/>
    <property type="evidence" value="ECO:0000314"/>
    <property type="project" value="UniProtKB"/>
</dbReference>
<dbReference type="GO" id="GO:0010566">
    <property type="term" value="P:regulation of ketone biosynthetic process"/>
    <property type="evidence" value="ECO:0000315"/>
    <property type="project" value="UniProtKB"/>
</dbReference>
<dbReference type="GO" id="GO:0002931">
    <property type="term" value="P:response to ischemia"/>
    <property type="evidence" value="ECO:0000315"/>
    <property type="project" value="MGI"/>
</dbReference>
<dbReference type="GO" id="GO:0031667">
    <property type="term" value="P:response to nutrient levels"/>
    <property type="evidence" value="ECO:0007669"/>
    <property type="project" value="Ensembl"/>
</dbReference>
<dbReference type="CDD" id="cd01412">
    <property type="entry name" value="SIRT5_Af1_CobB"/>
    <property type="match status" value="1"/>
</dbReference>
<dbReference type="FunFam" id="3.30.1600.10:FF:000005">
    <property type="entry name" value="NAD-dependent protein deacylase sirtuin-5, mitochondrial"/>
    <property type="match status" value="1"/>
</dbReference>
<dbReference type="Gene3D" id="3.30.1600.10">
    <property type="entry name" value="SIR2/SIRT2 'Small Domain"/>
    <property type="match status" value="1"/>
</dbReference>
<dbReference type="Gene3D" id="3.40.50.1220">
    <property type="entry name" value="TPP-binding domain"/>
    <property type="match status" value="1"/>
</dbReference>
<dbReference type="HAMAP" id="MF_01121">
    <property type="entry name" value="Sirtuin_ClassIII"/>
    <property type="match status" value="1"/>
</dbReference>
<dbReference type="InterPro" id="IPR029035">
    <property type="entry name" value="DHS-like_NAD/FAD-binding_dom"/>
</dbReference>
<dbReference type="InterPro" id="IPR050134">
    <property type="entry name" value="NAD-dep_sirtuin_deacylases"/>
</dbReference>
<dbReference type="InterPro" id="IPR003000">
    <property type="entry name" value="Sirtuin"/>
</dbReference>
<dbReference type="InterPro" id="IPR026591">
    <property type="entry name" value="Sirtuin_cat_small_dom_sf"/>
</dbReference>
<dbReference type="InterPro" id="IPR027546">
    <property type="entry name" value="Sirtuin_class_III"/>
</dbReference>
<dbReference type="InterPro" id="IPR026590">
    <property type="entry name" value="Ssirtuin_cat_dom"/>
</dbReference>
<dbReference type="PANTHER" id="PTHR11085">
    <property type="entry name" value="NAD-DEPENDENT PROTEIN DEACYLASE SIRTUIN-5, MITOCHONDRIAL-RELATED"/>
    <property type="match status" value="1"/>
</dbReference>
<dbReference type="PANTHER" id="PTHR11085:SF10">
    <property type="entry name" value="NAD-DEPENDENT PROTEIN DEACYLASE SIRTUIN-5, MITOCHONDRIAL-RELATED"/>
    <property type="match status" value="1"/>
</dbReference>
<dbReference type="Pfam" id="PF02146">
    <property type="entry name" value="SIR2"/>
    <property type="match status" value="1"/>
</dbReference>
<dbReference type="SUPFAM" id="SSF52467">
    <property type="entry name" value="DHS-like NAD/FAD-binding domain"/>
    <property type="match status" value="1"/>
</dbReference>
<dbReference type="PROSITE" id="PS50305">
    <property type="entry name" value="SIRTUIN"/>
    <property type="match status" value="1"/>
</dbReference>
<sequence>MRPLLIAPGRFISQLCCRRKPPASPQSKICLTMARPSSNMADFRKCFANAKHIAIISGAGVSAESGVPTFRGAGGYWRKWQAQDLATPQAFARNPSQVWEFYHYRREVMRSKEPNPGHLAIAQCEARLRDQGRRVVVITQNIDELHRKAGTKNLLEIHGTLFKTRCTSCGTVAENYRSPICPALAGKGAPEPETQDARIPVDKLPRCEEAGCGGLLRPHVVWFGENLDPAILEEVDRELALCDLCLVVGTSSVVYPAAMFAPQVASRGVPVAEFNMETTPATDRFRFHFPGPCGKTLPEALAPHETERTS</sequence>
<organism>
    <name type="scientific">Mus musculus</name>
    <name type="common">Mouse</name>
    <dbReference type="NCBI Taxonomy" id="10090"/>
    <lineage>
        <taxon>Eukaryota</taxon>
        <taxon>Metazoa</taxon>
        <taxon>Chordata</taxon>
        <taxon>Craniata</taxon>
        <taxon>Vertebrata</taxon>
        <taxon>Euteleostomi</taxon>
        <taxon>Mammalia</taxon>
        <taxon>Eutheria</taxon>
        <taxon>Euarchontoglires</taxon>
        <taxon>Glires</taxon>
        <taxon>Rodentia</taxon>
        <taxon>Myomorpha</taxon>
        <taxon>Muroidea</taxon>
        <taxon>Muridae</taxon>
        <taxon>Murinae</taxon>
        <taxon>Mus</taxon>
        <taxon>Mus</taxon>
    </lineage>
</organism>
<protein>
    <recommendedName>
        <fullName evidence="2">NAD-dependent protein deacylase sirtuin-5, mitochondrial</fullName>
        <ecNumber evidence="2 12">2.3.1.-</ecNumber>
    </recommendedName>
    <alternativeName>
        <fullName evidence="2">Regulatory protein SIR2 homolog 5</fullName>
    </alternativeName>
    <alternativeName>
        <fullName evidence="2">SIR2-like protein 5</fullName>
    </alternativeName>
</protein>
<evidence type="ECO:0000250" key="1">
    <source>
        <dbReference type="UniProtKB" id="Q9NXA8"/>
    </source>
</evidence>
<evidence type="ECO:0000255" key="2">
    <source>
        <dbReference type="HAMAP-Rule" id="MF_03160"/>
    </source>
</evidence>
<evidence type="ECO:0000255" key="3">
    <source>
        <dbReference type="PROSITE-ProRule" id="PRU00236"/>
    </source>
</evidence>
<evidence type="ECO:0000269" key="4">
    <source>
    </source>
</evidence>
<evidence type="ECO:0000269" key="5">
    <source>
    </source>
</evidence>
<evidence type="ECO:0000269" key="6">
    <source>
    </source>
</evidence>
<evidence type="ECO:0000269" key="7">
    <source>
    </source>
</evidence>
<evidence type="ECO:0000269" key="8">
    <source>
    </source>
</evidence>
<evidence type="ECO:0000269" key="9">
    <source>
    </source>
</evidence>
<evidence type="ECO:0000269" key="10">
    <source>
    </source>
</evidence>
<evidence type="ECO:0000269" key="11">
    <source>
    </source>
</evidence>
<evidence type="ECO:0000269" key="12">
    <source>
    </source>
</evidence>
<evidence type="ECO:0000305" key="13">
    <source>
    </source>
</evidence>
<name>SIR5_MOUSE</name>
<feature type="transit peptide" description="Mitochondrion" evidence="2 4">
    <location>
        <begin position="1"/>
        <end position="36"/>
    </location>
</feature>
<feature type="chain" id="PRO_0000110267" description="NAD-dependent protein deacylase sirtuin-5, mitochondrial">
    <location>
        <begin position="37"/>
        <end position="310"/>
    </location>
</feature>
<feature type="domain" description="Deacetylase sirtuin-type" evidence="3">
    <location>
        <begin position="37"/>
        <end position="307"/>
    </location>
</feature>
<feature type="active site" description="Proton acceptor" evidence="3">
    <location>
        <position position="158"/>
    </location>
</feature>
<feature type="binding site" evidence="2">
    <location>
        <begin position="58"/>
        <end position="77"/>
    </location>
    <ligand>
        <name>NAD(+)</name>
        <dbReference type="ChEBI" id="CHEBI:57540"/>
    </ligand>
</feature>
<feature type="binding site" evidence="2">
    <location>
        <position position="102"/>
    </location>
    <ligand>
        <name>substrate</name>
    </ligand>
</feature>
<feature type="binding site" evidence="2">
    <location>
        <position position="105"/>
    </location>
    <ligand>
        <name>substrate</name>
    </ligand>
</feature>
<feature type="binding site" evidence="2">
    <location>
        <begin position="140"/>
        <end position="143"/>
    </location>
    <ligand>
        <name>NAD(+)</name>
        <dbReference type="ChEBI" id="CHEBI:57540"/>
    </ligand>
</feature>
<feature type="binding site" evidence="2">
    <location>
        <position position="166"/>
    </location>
    <ligand>
        <name>Zn(2+)</name>
        <dbReference type="ChEBI" id="CHEBI:29105"/>
    </ligand>
</feature>
<feature type="binding site" evidence="2">
    <location>
        <position position="169"/>
    </location>
    <ligand>
        <name>Zn(2+)</name>
        <dbReference type="ChEBI" id="CHEBI:29105"/>
    </ligand>
</feature>
<feature type="binding site" evidence="2">
    <location>
        <position position="207"/>
    </location>
    <ligand>
        <name>Zn(2+)</name>
        <dbReference type="ChEBI" id="CHEBI:29105"/>
    </ligand>
</feature>
<feature type="binding site" evidence="2">
    <location>
        <position position="212"/>
    </location>
    <ligand>
        <name>Zn(2+)</name>
        <dbReference type="ChEBI" id="CHEBI:29105"/>
    </ligand>
</feature>
<feature type="binding site" evidence="2">
    <location>
        <begin position="249"/>
        <end position="251"/>
    </location>
    <ligand>
        <name>NAD(+)</name>
        <dbReference type="ChEBI" id="CHEBI:57540"/>
    </ligand>
</feature>
<feature type="binding site" evidence="2">
    <location>
        <begin position="275"/>
        <end position="277"/>
    </location>
    <ligand>
        <name>NAD(+)</name>
        <dbReference type="ChEBI" id="CHEBI:57540"/>
    </ligand>
</feature>
<feature type="binding site" evidence="2">
    <location>
        <position position="293"/>
    </location>
    <ligand>
        <name>NAD(+)</name>
        <dbReference type="ChEBI" id="CHEBI:57540"/>
    </ligand>
</feature>
<feature type="mutagenesis site" description="Loss of enzyme activity." evidence="4">
    <original>H</original>
    <variation>Y</variation>
    <location>
        <position position="158"/>
    </location>
</feature>
<gene>
    <name type="primary">Sirt5</name>
    <name type="synonym">Sir2l5</name>
</gene>